<gene>
    <name type="primary">Mcmbp</name>
</gene>
<accession>Q8R3C0</accession>
<accession>D3Z3G1</accession>
<feature type="chain" id="PRO_0000089828" description="Mini-chromosome maintenance complex-binding protein">
    <location>
        <begin position="1"/>
        <end position="642"/>
    </location>
</feature>
<feature type="region of interest" description="Disordered" evidence="3">
    <location>
        <begin position="151"/>
        <end position="196"/>
    </location>
</feature>
<feature type="compositionally biased region" description="Polar residues" evidence="3">
    <location>
        <begin position="151"/>
        <end position="161"/>
    </location>
</feature>
<feature type="modified residue" description="Phosphoserine" evidence="2">
    <location>
        <position position="154"/>
    </location>
</feature>
<feature type="modified residue" description="Phosphothreonine" evidence="2">
    <location>
        <position position="160"/>
    </location>
</feature>
<feature type="modified residue" description="Phosphoserine" evidence="2">
    <location>
        <position position="167"/>
    </location>
</feature>
<feature type="modified residue" description="Phosphoserine" evidence="5">
    <location>
        <position position="298"/>
    </location>
</feature>
<organism>
    <name type="scientific">Mus musculus</name>
    <name type="common">Mouse</name>
    <dbReference type="NCBI Taxonomy" id="10090"/>
    <lineage>
        <taxon>Eukaryota</taxon>
        <taxon>Metazoa</taxon>
        <taxon>Chordata</taxon>
        <taxon>Craniata</taxon>
        <taxon>Vertebrata</taxon>
        <taxon>Euteleostomi</taxon>
        <taxon>Mammalia</taxon>
        <taxon>Eutheria</taxon>
        <taxon>Euarchontoglires</taxon>
        <taxon>Glires</taxon>
        <taxon>Rodentia</taxon>
        <taxon>Myomorpha</taxon>
        <taxon>Muroidea</taxon>
        <taxon>Muridae</taxon>
        <taxon>Murinae</taxon>
        <taxon>Mus</taxon>
        <taxon>Mus</taxon>
    </lineage>
</organism>
<protein>
    <recommendedName>
        <fullName>Mini-chromosome maintenance complex-binding protein</fullName>
        <shortName>MCM-BP</shortName>
        <shortName>MCM-binding protein</shortName>
    </recommendedName>
</protein>
<proteinExistence type="evidence at protein level"/>
<comment type="function">
    <text evidence="1">Associated component of the MCM complex that acts as a regulator of DNA replication. Binds to the MCM complex during late S phase and promotes the disassembly of the MCM complex from chromatin, thereby acting as a key regulator of pre-replication complex (pre-RC) unloading from replicated DNA. Can dissociate the MCM complex without addition of ATP; probably acts by destabilizing interactions of each individual subunits of the MCM complex. Required for sister chromatid cohesion (By similarity).</text>
</comment>
<comment type="subunit">
    <text evidence="1">Interacts with the MCM complex: associates with the MCM3-7 complex which lacks MCM2, while it does not interact with the MCM complex when MCM2 is present (MCM2-7 complex). Interacts with the RPA complex, when composed of all RPA1, RPA2 and RPA3 components, but not with RPA1 or RPA2 alone (By similarity).</text>
</comment>
<comment type="subcellular location">
    <subcellularLocation>
        <location evidence="1">Nucleus</location>
    </subcellularLocation>
    <text evidence="1">Associates with chromatin. Highly associated with chromatin in G1/S and S phases, reduced binding to chromatin in G2, and further decreased binding in early M phase. It then reassociates with chromatin in late M phase. Dissociates from chromatin later than component of the MCM complex (By similarity).</text>
</comment>
<comment type="similarity">
    <text evidence="4">Belongs to the MCMBP family.</text>
</comment>
<dbReference type="EMBL" id="AC122767">
    <property type="status" value="NOT_ANNOTATED_CDS"/>
    <property type="molecule type" value="Genomic_DNA"/>
</dbReference>
<dbReference type="EMBL" id="AC136741">
    <property type="status" value="NOT_ANNOTATED_CDS"/>
    <property type="molecule type" value="Genomic_DNA"/>
</dbReference>
<dbReference type="EMBL" id="BC025641">
    <property type="protein sequence ID" value="AAH25641.1"/>
    <property type="molecule type" value="mRNA"/>
</dbReference>
<dbReference type="EMBL" id="BC038342">
    <property type="protein sequence ID" value="AAH38342.1"/>
    <property type="molecule type" value="mRNA"/>
</dbReference>
<dbReference type="CCDS" id="CCDS40153.1"/>
<dbReference type="RefSeq" id="NP_666067.1">
    <property type="nucleotide sequence ID" value="NM_145955.3"/>
</dbReference>
<dbReference type="BioGRID" id="229174">
    <property type="interactions" value="8"/>
</dbReference>
<dbReference type="FunCoup" id="Q8R3C0">
    <property type="interactions" value="4244"/>
</dbReference>
<dbReference type="IntAct" id="Q8R3C0">
    <property type="interactions" value="2"/>
</dbReference>
<dbReference type="MINT" id="Q8R3C0"/>
<dbReference type="STRING" id="10090.ENSMUSP00000062843"/>
<dbReference type="GlyGen" id="Q8R3C0">
    <property type="glycosylation" value="1 site, 1 O-linked glycan (1 site)"/>
</dbReference>
<dbReference type="iPTMnet" id="Q8R3C0"/>
<dbReference type="PhosphoSitePlus" id="Q8R3C0"/>
<dbReference type="SwissPalm" id="Q8R3C0"/>
<dbReference type="jPOST" id="Q8R3C0"/>
<dbReference type="PaxDb" id="10090-ENSMUSP00000062843"/>
<dbReference type="PeptideAtlas" id="Q8R3C0"/>
<dbReference type="ProteomicsDB" id="295842"/>
<dbReference type="Pumba" id="Q8R3C0"/>
<dbReference type="Antibodypedia" id="46307">
    <property type="antibodies" value="146 antibodies from 26 providers"/>
</dbReference>
<dbReference type="Ensembl" id="ENSMUST00000057557.14">
    <property type="protein sequence ID" value="ENSMUSP00000062843.8"/>
    <property type="gene ID" value="ENSMUSG00000048170.15"/>
</dbReference>
<dbReference type="GeneID" id="210711"/>
<dbReference type="KEGG" id="mmu:210711"/>
<dbReference type="UCSC" id="uc009jzh.1">
    <property type="organism name" value="mouse"/>
</dbReference>
<dbReference type="AGR" id="MGI:1920977"/>
<dbReference type="CTD" id="79892"/>
<dbReference type="MGI" id="MGI:1920977">
    <property type="gene designation" value="Mcmbp"/>
</dbReference>
<dbReference type="VEuPathDB" id="HostDB:ENSMUSG00000048170"/>
<dbReference type="eggNOG" id="KOG2545">
    <property type="taxonomic scope" value="Eukaryota"/>
</dbReference>
<dbReference type="GeneTree" id="ENSGT00390000017265"/>
<dbReference type="HOGENOM" id="CLU_029811_0_0_1"/>
<dbReference type="InParanoid" id="Q8R3C0"/>
<dbReference type="OMA" id="EEHTEMI"/>
<dbReference type="OrthoDB" id="6314at9989"/>
<dbReference type="PhylomeDB" id="Q8R3C0"/>
<dbReference type="TreeFam" id="TF324793"/>
<dbReference type="BioGRID-ORCS" id="210711">
    <property type="hits" value="24 hits in 79 CRISPR screens"/>
</dbReference>
<dbReference type="ChiTaRS" id="Mcmbp">
    <property type="organism name" value="mouse"/>
</dbReference>
<dbReference type="PRO" id="PR:Q8R3C0"/>
<dbReference type="Proteomes" id="UP000000589">
    <property type="component" value="Chromosome 7"/>
</dbReference>
<dbReference type="RNAct" id="Q8R3C0">
    <property type="molecule type" value="protein"/>
</dbReference>
<dbReference type="ExpressionAtlas" id="Q8R3C0">
    <property type="expression patterns" value="baseline and differential"/>
</dbReference>
<dbReference type="GO" id="GO:0030054">
    <property type="term" value="C:cell junction"/>
    <property type="evidence" value="ECO:0007669"/>
    <property type="project" value="Ensembl"/>
</dbReference>
<dbReference type="GO" id="GO:0005829">
    <property type="term" value="C:cytosol"/>
    <property type="evidence" value="ECO:0007669"/>
    <property type="project" value="Ensembl"/>
</dbReference>
<dbReference type="GO" id="GO:0042555">
    <property type="term" value="C:MCM complex"/>
    <property type="evidence" value="ECO:0007669"/>
    <property type="project" value="Ensembl"/>
</dbReference>
<dbReference type="GO" id="GO:0005654">
    <property type="term" value="C:nucleoplasm"/>
    <property type="evidence" value="ECO:0007669"/>
    <property type="project" value="Ensembl"/>
</dbReference>
<dbReference type="GO" id="GO:0005634">
    <property type="term" value="C:nucleus"/>
    <property type="evidence" value="ECO:0000250"/>
    <property type="project" value="UniProtKB"/>
</dbReference>
<dbReference type="GO" id="GO:0003682">
    <property type="term" value="F:chromatin binding"/>
    <property type="evidence" value="ECO:0000250"/>
    <property type="project" value="UniProtKB"/>
</dbReference>
<dbReference type="GO" id="GO:0051301">
    <property type="term" value="P:cell division"/>
    <property type="evidence" value="ECO:0007669"/>
    <property type="project" value="UniProtKB-KW"/>
</dbReference>
<dbReference type="GO" id="GO:0006261">
    <property type="term" value="P:DNA-templated DNA replication"/>
    <property type="evidence" value="ECO:0000250"/>
    <property type="project" value="UniProtKB"/>
</dbReference>
<dbReference type="GO" id="GO:0007062">
    <property type="term" value="P:sister chromatid cohesion"/>
    <property type="evidence" value="ECO:0000250"/>
    <property type="project" value="UniProtKB"/>
</dbReference>
<dbReference type="InterPro" id="IPR019140">
    <property type="entry name" value="MCM_complex-bd"/>
</dbReference>
<dbReference type="PANTHER" id="PTHR13489">
    <property type="entry name" value="MINI-CHROMOSOME MAINTENANCE COMPLEX-BINDING PROTEIN"/>
    <property type="match status" value="1"/>
</dbReference>
<dbReference type="PANTHER" id="PTHR13489:SF0">
    <property type="entry name" value="MINI-CHROMOSOME MAINTENANCE COMPLEX-BINDING PROTEIN"/>
    <property type="match status" value="1"/>
</dbReference>
<dbReference type="Pfam" id="PF09739">
    <property type="entry name" value="MCM_bind"/>
    <property type="match status" value="1"/>
</dbReference>
<sequence length="642" mass="72891">MPCGEDWLSHPLGIVQGFFAQNGVNPDWEKKVIEYFKEKLKENNAPKWVPSLNEVPLHYLKPNSFVKFRCMIQDMFDPEFYMGIYETVNQNTKARVLHFGKYRDVAECGPQQELDLSSPRSTTSERQTFYCVPVPGESSWVKEAYVNANQARVSPSTSYTPSRHKRSYEDDEDMDLQPSKQKEQHPGSRQAGGLGGLHWCGEPKRLETEASSGQQLNTLNLSSPFDLNFPLPGEKGPACLVKVYEDWDCFKVNDVLELYGVLSVDPVLSVLNSEERDASALLDPMECTDMAEEQRVHSPPASLVPRIHVILAQKLQHINPLLPTCLNKEESRSCQFVSNFMSELSPVRAELLGFLTHALLGDSLAAEYLILHLISTVYTRRDVLPLGKFTVNLSGCPQNSTFTEHLYRIIQHLVPASFRLQMTIENMNQLKLIPHKDYTANRLVSGLLQLPNNTSLVIDETLLEQGQLDTPGVHNVTALSNLITWQKVDYDFSYHQMEFPCNINVLITSEGRSLLPADCQIHLQPQLIPPNMEEYMNGLLSAVLPSVLNKFRIYLTLLRFLDYNLSDDITKAVEDDFVEMRKDDPQSITADDLHQLLVVARFLSLSVGQTTLSRERWLRAKQLELSRKARLQQQKSVNGNEL</sequence>
<keyword id="KW-0131">Cell cycle</keyword>
<keyword id="KW-0132">Cell division</keyword>
<keyword id="KW-0235">DNA replication</keyword>
<keyword id="KW-0498">Mitosis</keyword>
<keyword id="KW-0539">Nucleus</keyword>
<keyword id="KW-0597">Phosphoprotein</keyword>
<keyword id="KW-1185">Reference proteome</keyword>
<reference key="1">
    <citation type="journal article" date="2009" name="PLoS Biol.">
        <title>Lineage-specific biology revealed by a finished genome assembly of the mouse.</title>
        <authorList>
            <person name="Church D.M."/>
            <person name="Goodstadt L."/>
            <person name="Hillier L.W."/>
            <person name="Zody M.C."/>
            <person name="Goldstein S."/>
            <person name="She X."/>
            <person name="Bult C.J."/>
            <person name="Agarwala R."/>
            <person name="Cherry J.L."/>
            <person name="DiCuccio M."/>
            <person name="Hlavina W."/>
            <person name="Kapustin Y."/>
            <person name="Meric P."/>
            <person name="Maglott D."/>
            <person name="Birtle Z."/>
            <person name="Marques A.C."/>
            <person name="Graves T."/>
            <person name="Zhou S."/>
            <person name="Teague B."/>
            <person name="Potamousis K."/>
            <person name="Churas C."/>
            <person name="Place M."/>
            <person name="Herschleb J."/>
            <person name="Runnheim R."/>
            <person name="Forrest D."/>
            <person name="Amos-Landgraf J."/>
            <person name="Schwartz D.C."/>
            <person name="Cheng Z."/>
            <person name="Lindblad-Toh K."/>
            <person name="Eichler E.E."/>
            <person name="Ponting C.P."/>
        </authorList>
    </citation>
    <scope>NUCLEOTIDE SEQUENCE [LARGE SCALE GENOMIC DNA]</scope>
    <source>
        <strain>C57BL/6J</strain>
    </source>
</reference>
<reference key="2">
    <citation type="journal article" date="2004" name="Genome Res.">
        <title>The status, quality, and expansion of the NIH full-length cDNA project: the Mammalian Gene Collection (MGC).</title>
        <authorList>
            <consortium name="The MGC Project Team"/>
        </authorList>
    </citation>
    <scope>NUCLEOTIDE SEQUENCE [LARGE SCALE MRNA]</scope>
    <source>
        <strain>FVB/N</strain>
        <tissue>Mammary tumor</tissue>
        <tissue>Salivary gland</tissue>
    </source>
</reference>
<reference key="3">
    <citation type="journal article" date="2010" name="Cell">
        <title>A tissue-specific atlas of mouse protein phosphorylation and expression.</title>
        <authorList>
            <person name="Huttlin E.L."/>
            <person name="Jedrychowski M.P."/>
            <person name="Elias J.E."/>
            <person name="Goswami T."/>
            <person name="Rad R."/>
            <person name="Beausoleil S.A."/>
            <person name="Villen J."/>
            <person name="Haas W."/>
            <person name="Sowa M.E."/>
            <person name="Gygi S.P."/>
        </authorList>
    </citation>
    <scope>PHOSPHORYLATION [LARGE SCALE ANALYSIS] AT SER-298</scope>
    <scope>IDENTIFICATION BY MASS SPECTROMETRY [LARGE SCALE ANALYSIS]</scope>
    <source>
        <tissue>Lung</tissue>
        <tissue>Spleen</tissue>
        <tissue>Testis</tissue>
    </source>
</reference>
<evidence type="ECO:0000250" key="1"/>
<evidence type="ECO:0000250" key="2">
    <source>
        <dbReference type="UniProtKB" id="Q9BTE3"/>
    </source>
</evidence>
<evidence type="ECO:0000256" key="3">
    <source>
        <dbReference type="SAM" id="MobiDB-lite"/>
    </source>
</evidence>
<evidence type="ECO:0000305" key="4"/>
<evidence type="ECO:0007744" key="5">
    <source>
    </source>
</evidence>
<name>MCMBP_MOUSE</name>